<proteinExistence type="inferred from homology"/>
<comment type="similarity">
    <text evidence="1">Belongs to the UPF0319 family.</text>
</comment>
<protein>
    <recommendedName>
        <fullName evidence="1">UPF0319 protein swp_2242</fullName>
    </recommendedName>
</protein>
<gene>
    <name type="ordered locus">swp_2242</name>
</gene>
<name>Y2242_SHEPW</name>
<evidence type="ECO:0000255" key="1">
    <source>
        <dbReference type="HAMAP-Rule" id="MF_00789"/>
    </source>
</evidence>
<accession>B8CNM2</accession>
<dbReference type="EMBL" id="CP000472">
    <property type="protein sequence ID" value="ACJ28991.1"/>
    <property type="molecule type" value="Genomic_DNA"/>
</dbReference>
<dbReference type="RefSeq" id="WP_020912351.1">
    <property type="nucleotide sequence ID" value="NC_011566.1"/>
</dbReference>
<dbReference type="STRING" id="225849.swp_2242"/>
<dbReference type="KEGG" id="swp:swp_2242"/>
<dbReference type="eggNOG" id="COG3110">
    <property type="taxonomic scope" value="Bacteria"/>
</dbReference>
<dbReference type="HOGENOM" id="CLU_073782_1_0_6"/>
<dbReference type="OrthoDB" id="7058190at2"/>
<dbReference type="Proteomes" id="UP000000753">
    <property type="component" value="Chromosome"/>
</dbReference>
<dbReference type="HAMAP" id="MF_00789">
    <property type="entry name" value="UPF0319"/>
    <property type="match status" value="1"/>
</dbReference>
<dbReference type="InterPro" id="IPR018635">
    <property type="entry name" value="UPF0319"/>
</dbReference>
<dbReference type="PANTHER" id="PTHR38108">
    <property type="entry name" value="UPF0319 PROTEIN YCCT"/>
    <property type="match status" value="1"/>
</dbReference>
<dbReference type="PANTHER" id="PTHR38108:SF1">
    <property type="entry name" value="UPF0319 PROTEIN YCCT"/>
    <property type="match status" value="1"/>
</dbReference>
<dbReference type="Pfam" id="PF09829">
    <property type="entry name" value="DUF2057"/>
    <property type="match status" value="1"/>
</dbReference>
<organism>
    <name type="scientific">Shewanella piezotolerans (strain WP3 / JCM 13877)</name>
    <dbReference type="NCBI Taxonomy" id="225849"/>
    <lineage>
        <taxon>Bacteria</taxon>
        <taxon>Pseudomonadati</taxon>
        <taxon>Pseudomonadota</taxon>
        <taxon>Gammaproteobacteria</taxon>
        <taxon>Alteromonadales</taxon>
        <taxon>Shewanellaceae</taxon>
        <taxon>Shewanella</taxon>
    </lineage>
</organism>
<feature type="signal peptide" evidence="1">
    <location>
        <begin position="1"/>
        <end position="21"/>
    </location>
</feature>
<feature type="chain" id="PRO_1000200498" description="UPF0319 protein swp_2242">
    <location>
        <begin position="22"/>
        <end position="218"/>
    </location>
</feature>
<reference key="1">
    <citation type="journal article" date="2008" name="PLoS ONE">
        <title>Environmental adaptation: genomic analysis of the piezotolerant and psychrotolerant deep-sea iron reducing bacterium Shewanella piezotolerans WP3.</title>
        <authorList>
            <person name="Wang F."/>
            <person name="Wang J."/>
            <person name="Jian H."/>
            <person name="Zhang B."/>
            <person name="Li S."/>
            <person name="Wang F."/>
            <person name="Zeng X."/>
            <person name="Gao L."/>
            <person name="Bartlett D.H."/>
            <person name="Yu J."/>
            <person name="Hu S."/>
            <person name="Xiao X."/>
        </authorList>
    </citation>
    <scope>NUCLEOTIDE SEQUENCE [LARGE SCALE GENOMIC DNA]</scope>
    <source>
        <strain>WP3 / JCM 13877</strain>
    </source>
</reference>
<sequence length="218" mass="24157">MRLSQSVLTALLICVNSAAFANVEVTLPSNSELVLVNGKESDSTDKLTLENGENQLALRYIGRYQQQGSQTQFSSDVIIMTFLAENTSLTIALPRIRSNSAADAFNRDPKISLKNSSEVDIAFRQDKLLKEGMQLGRDYEKEVAEYNSNNQVASVAALAPSITALVQAKPVVIENHGQPKNTINQSDQVNVGQMLDFWYQQADEETRKAFKLKINSKE</sequence>
<keyword id="KW-0732">Signal</keyword>